<dbReference type="EMBL" id="AM933173">
    <property type="protein sequence ID" value="CAR39696.1"/>
    <property type="molecule type" value="Genomic_DNA"/>
</dbReference>
<dbReference type="RefSeq" id="WP_000906930.1">
    <property type="nucleotide sequence ID" value="NC_011274.1"/>
</dbReference>
<dbReference type="SMR" id="B5R7J9"/>
<dbReference type="KEGG" id="seg:SG3923"/>
<dbReference type="HOGENOM" id="CLU_006325_3_0_6"/>
<dbReference type="Proteomes" id="UP000008321">
    <property type="component" value="Chromosome"/>
</dbReference>
<dbReference type="GO" id="GO:0005524">
    <property type="term" value="F:ATP binding"/>
    <property type="evidence" value="ECO:0007669"/>
    <property type="project" value="UniProtKB-UniRule"/>
</dbReference>
<dbReference type="GO" id="GO:0003677">
    <property type="term" value="F:DNA binding"/>
    <property type="evidence" value="ECO:0007669"/>
    <property type="project" value="UniProtKB-KW"/>
</dbReference>
<dbReference type="GO" id="GO:0003700">
    <property type="term" value="F:DNA-binding transcription factor activity"/>
    <property type="evidence" value="ECO:0007669"/>
    <property type="project" value="UniProtKB-UniRule"/>
</dbReference>
<dbReference type="GO" id="GO:0045913">
    <property type="term" value="P:positive regulation of carbohydrate metabolic process"/>
    <property type="evidence" value="ECO:0007669"/>
    <property type="project" value="UniProtKB-UniRule"/>
</dbReference>
<dbReference type="GO" id="GO:0045893">
    <property type="term" value="P:positive regulation of DNA-templated transcription"/>
    <property type="evidence" value="ECO:0007669"/>
    <property type="project" value="UniProtKB-UniRule"/>
</dbReference>
<dbReference type="CDD" id="cd06170">
    <property type="entry name" value="LuxR_C_like"/>
    <property type="match status" value="1"/>
</dbReference>
<dbReference type="FunFam" id="1.10.10.10:FF:000115">
    <property type="entry name" value="HTH-type transcriptional regulator MalT"/>
    <property type="match status" value="1"/>
</dbReference>
<dbReference type="Gene3D" id="3.40.50.300">
    <property type="entry name" value="P-loop containing nucleotide triphosphate hydrolases"/>
    <property type="match status" value="1"/>
</dbReference>
<dbReference type="Gene3D" id="1.25.40.10">
    <property type="entry name" value="Tetratricopeptide repeat domain"/>
    <property type="match status" value="1"/>
</dbReference>
<dbReference type="Gene3D" id="1.10.10.10">
    <property type="entry name" value="Winged helix-like DNA-binding domain superfamily/Winged helix DNA-binding domain"/>
    <property type="match status" value="1"/>
</dbReference>
<dbReference type="HAMAP" id="MF_01247">
    <property type="entry name" value="HTH_type_MalT"/>
    <property type="match status" value="1"/>
</dbReference>
<dbReference type="InterPro" id="IPR027417">
    <property type="entry name" value="P-loop_NTPase"/>
</dbReference>
<dbReference type="InterPro" id="IPR016032">
    <property type="entry name" value="Sig_transdc_resp-reg_C-effctor"/>
</dbReference>
<dbReference type="InterPro" id="IPR011990">
    <property type="entry name" value="TPR-like_helical_dom_sf"/>
</dbReference>
<dbReference type="InterPro" id="IPR041617">
    <property type="entry name" value="TPR_MalT"/>
</dbReference>
<dbReference type="InterPro" id="IPR023768">
    <property type="entry name" value="Tscrpt_reg_HTH_MalT"/>
</dbReference>
<dbReference type="InterPro" id="IPR000792">
    <property type="entry name" value="Tscrpt_reg_LuxR_C"/>
</dbReference>
<dbReference type="InterPro" id="IPR036388">
    <property type="entry name" value="WH-like_DNA-bd_sf"/>
</dbReference>
<dbReference type="NCBIfam" id="NF003420">
    <property type="entry name" value="PRK04841.1"/>
    <property type="match status" value="1"/>
</dbReference>
<dbReference type="PANTHER" id="PTHR44688">
    <property type="entry name" value="DNA-BINDING TRANSCRIPTIONAL ACTIVATOR DEVR_DOSR"/>
    <property type="match status" value="1"/>
</dbReference>
<dbReference type="PANTHER" id="PTHR44688:SF16">
    <property type="entry name" value="DNA-BINDING TRANSCRIPTIONAL ACTIVATOR DEVR_DOSR"/>
    <property type="match status" value="1"/>
</dbReference>
<dbReference type="Pfam" id="PF00196">
    <property type="entry name" value="GerE"/>
    <property type="match status" value="1"/>
</dbReference>
<dbReference type="Pfam" id="PF17874">
    <property type="entry name" value="TPR_MalT"/>
    <property type="match status" value="1"/>
</dbReference>
<dbReference type="PRINTS" id="PR00038">
    <property type="entry name" value="HTHLUXR"/>
</dbReference>
<dbReference type="SMART" id="SM00421">
    <property type="entry name" value="HTH_LUXR"/>
    <property type="match status" value="1"/>
</dbReference>
<dbReference type="SUPFAM" id="SSF46894">
    <property type="entry name" value="C-terminal effector domain of the bipartite response regulators"/>
    <property type="match status" value="1"/>
</dbReference>
<dbReference type="SUPFAM" id="SSF52540">
    <property type="entry name" value="P-loop containing nucleoside triphosphate hydrolases"/>
    <property type="match status" value="1"/>
</dbReference>
<dbReference type="SUPFAM" id="SSF48452">
    <property type="entry name" value="TPR-like"/>
    <property type="match status" value="1"/>
</dbReference>
<dbReference type="PROSITE" id="PS00622">
    <property type="entry name" value="HTH_LUXR_1"/>
    <property type="match status" value="1"/>
</dbReference>
<dbReference type="PROSITE" id="PS50043">
    <property type="entry name" value="HTH_LUXR_2"/>
    <property type="match status" value="1"/>
</dbReference>
<evidence type="ECO:0000255" key="1">
    <source>
        <dbReference type="HAMAP-Rule" id="MF_01247"/>
    </source>
</evidence>
<organism>
    <name type="scientific">Salmonella gallinarum (strain 287/91 / NCTC 13346)</name>
    <dbReference type="NCBI Taxonomy" id="550538"/>
    <lineage>
        <taxon>Bacteria</taxon>
        <taxon>Pseudomonadati</taxon>
        <taxon>Pseudomonadota</taxon>
        <taxon>Gammaproteobacteria</taxon>
        <taxon>Enterobacterales</taxon>
        <taxon>Enterobacteriaceae</taxon>
        <taxon>Salmonella</taxon>
    </lineage>
</organism>
<protein>
    <recommendedName>
        <fullName evidence="1">HTH-type transcriptional regulator MalT</fullName>
    </recommendedName>
    <alternativeName>
        <fullName evidence="1">ATP-dependent transcriptional activator MalT</fullName>
    </alternativeName>
</protein>
<feature type="chain" id="PRO_1000139856" description="HTH-type transcriptional regulator MalT">
    <location>
        <begin position="1"/>
        <end position="901"/>
    </location>
</feature>
<feature type="domain" description="HTH luxR-type" evidence="1">
    <location>
        <begin position="829"/>
        <end position="894"/>
    </location>
</feature>
<feature type="DNA-binding region" description="H-T-H motif" evidence="1">
    <location>
        <begin position="853"/>
        <end position="872"/>
    </location>
</feature>
<feature type="binding site" evidence="1">
    <location>
        <begin position="39"/>
        <end position="46"/>
    </location>
    <ligand>
        <name>ATP</name>
        <dbReference type="ChEBI" id="CHEBI:30616"/>
    </ligand>
</feature>
<keyword id="KW-0010">Activator</keyword>
<keyword id="KW-0067">ATP-binding</keyword>
<keyword id="KW-0119">Carbohydrate metabolism</keyword>
<keyword id="KW-0238">DNA-binding</keyword>
<keyword id="KW-0547">Nucleotide-binding</keyword>
<keyword id="KW-0804">Transcription</keyword>
<keyword id="KW-0805">Transcription regulation</keyword>
<proteinExistence type="inferred from homology"/>
<accession>B5R7J9</accession>
<name>MALT_SALG2</name>
<gene>
    <name evidence="1" type="primary">malT</name>
    <name type="ordered locus">SG3923</name>
</gene>
<comment type="function">
    <text evidence="1">Positively regulates the transcription of the maltose regulon whose gene products are responsible for uptake and catabolism of malto-oligosaccharides. Specifically binds to the promoter region of its target genes, recognizing a short DNA motif called the MalT box.</text>
</comment>
<comment type="activity regulation">
    <text evidence="1">Activated by ATP and maltotriose, which are both required for DNA binding.</text>
</comment>
<comment type="subunit">
    <text evidence="1">Monomer in solution. Oligomerizes to an active state in the presence of the positive effectors ATP and maltotriose.</text>
</comment>
<comment type="similarity">
    <text evidence="1">Belongs to the MalT family.</text>
</comment>
<sequence length="901" mass="103103">MLIPSKLSRPVRLDHTMVRERLLAKLSGANNFRLALVTSPAGYGKTTLVSQWAAGKNELGWYSLDEGDNQQERFASYLIAAIQQATGGHCSTSEAMAQKRQYASLRSLFAQLFIELAQWHRPLYLVIDDYHLITNPVIHDAMRFFLRHQPENFTLVVLSRNLPQLGIANLRVRDQLLEIGSQQLAFNHQEAKQFFDRRLSSPIEAAESSRMCDDVAGWATALQLIALSARQNHTSAHHSARRLAGINASHLSDYLVDEVLDNVDVSTRHFLLKSAILRSMNDALIVRVTGEENGQMRLEEIERQGLFLQRMDDTGEWFSYHPLFGSFLRQRCQWELAAELPEIHRAAAESWMEQGFPSEAIHHALAAGDAQMLRDILLNHAWGLFNHSELALLEESLKALPWESLLENPRLVLLQAWLMQSQHRYSEVNTLLARAEQEIKGVMDGTLHAEFNALRAQVAINDGNPEEAERLAKLALDELPLAWFYSRIVATSVHGEVLHCKGDLSQSLSLMQQTEQMARHHDVWHYALWSLIQQSEIQFAQGFLQAAWETQERAFQLIKEQHLEQLPMHEFLVRIRAQLLWAWARLDEAEASARSGIAVLSTFQPQQQLQCLTLLVQCSLARGDLDNARSQLNRLENLLGNGRYHCDWISNADKVRVIYWQLTGDKKSAANWLRHTPKPAFANNHFLQGQWRNIARAQILLGEFEPAEIVLEELNENARSLRLMSDLNRNLLLLNQLYWQSGRKNDAQRVLLDALQLANRTGFISHFVIEGEAMAQQLRQLIQLNTLPEMEQHRAQRILREINQHHRHKFAHFDEGFVERLLNHPDVPELIRTSPLTQREWQVLGLIYSGYSNEQIAGELAVAATTIKTHIRNLYQKLGVAHRQDAVQHAQQLLKMMGYGV</sequence>
<reference key="1">
    <citation type="journal article" date="2008" name="Genome Res.">
        <title>Comparative genome analysis of Salmonella enteritidis PT4 and Salmonella gallinarum 287/91 provides insights into evolutionary and host adaptation pathways.</title>
        <authorList>
            <person name="Thomson N.R."/>
            <person name="Clayton D.J."/>
            <person name="Windhorst D."/>
            <person name="Vernikos G."/>
            <person name="Davidson S."/>
            <person name="Churcher C."/>
            <person name="Quail M.A."/>
            <person name="Stevens M."/>
            <person name="Jones M.A."/>
            <person name="Watson M."/>
            <person name="Barron A."/>
            <person name="Layton A."/>
            <person name="Pickard D."/>
            <person name="Kingsley R.A."/>
            <person name="Bignell A."/>
            <person name="Clark L."/>
            <person name="Harris B."/>
            <person name="Ormond D."/>
            <person name="Abdellah Z."/>
            <person name="Brooks K."/>
            <person name="Cherevach I."/>
            <person name="Chillingworth T."/>
            <person name="Woodward J."/>
            <person name="Norberczak H."/>
            <person name="Lord A."/>
            <person name="Arrowsmith C."/>
            <person name="Jagels K."/>
            <person name="Moule S."/>
            <person name="Mungall K."/>
            <person name="Saunders M."/>
            <person name="Whitehead S."/>
            <person name="Chabalgoity J.A."/>
            <person name="Maskell D."/>
            <person name="Humphreys T."/>
            <person name="Roberts M."/>
            <person name="Barrow P.A."/>
            <person name="Dougan G."/>
            <person name="Parkhill J."/>
        </authorList>
    </citation>
    <scope>NUCLEOTIDE SEQUENCE [LARGE SCALE GENOMIC DNA]</scope>
    <source>
        <strain>287/91 / NCTC 13346</strain>
    </source>
</reference>